<gene>
    <name evidence="1" type="primary">rsmA</name>
    <name evidence="1" type="synonym">ksgA</name>
    <name type="ordered locus">LCA_1655</name>
</gene>
<name>RSMA_LATSS</name>
<evidence type="ECO:0000255" key="1">
    <source>
        <dbReference type="HAMAP-Rule" id="MF_00607"/>
    </source>
</evidence>
<protein>
    <recommendedName>
        <fullName evidence="1">Ribosomal RNA small subunit methyltransferase A</fullName>
        <ecNumber evidence="1">2.1.1.182</ecNumber>
    </recommendedName>
    <alternativeName>
        <fullName evidence="1">16S rRNA (adenine(1518)-N(6)/adenine(1519)-N(6))-dimethyltransferase</fullName>
    </alternativeName>
    <alternativeName>
        <fullName evidence="1">16S rRNA dimethyladenosine transferase</fullName>
    </alternativeName>
    <alternativeName>
        <fullName evidence="1">16S rRNA dimethylase</fullName>
    </alternativeName>
    <alternativeName>
        <fullName evidence="1">S-adenosylmethionine-6-N', N'-adenosyl(rRNA) dimethyltransferase</fullName>
    </alternativeName>
</protein>
<proteinExistence type="inferred from homology"/>
<comment type="function">
    <text evidence="1">Specifically dimethylates two adjacent adenosines (A1518 and A1519) in the loop of a conserved hairpin near the 3'-end of 16S rRNA in the 30S particle. May play a critical role in biogenesis of 30S subunits.</text>
</comment>
<comment type="catalytic activity">
    <reaction evidence="1">
        <text>adenosine(1518)/adenosine(1519) in 16S rRNA + 4 S-adenosyl-L-methionine = N(6)-dimethyladenosine(1518)/N(6)-dimethyladenosine(1519) in 16S rRNA + 4 S-adenosyl-L-homocysteine + 4 H(+)</text>
        <dbReference type="Rhea" id="RHEA:19609"/>
        <dbReference type="Rhea" id="RHEA-COMP:10232"/>
        <dbReference type="Rhea" id="RHEA-COMP:10233"/>
        <dbReference type="ChEBI" id="CHEBI:15378"/>
        <dbReference type="ChEBI" id="CHEBI:57856"/>
        <dbReference type="ChEBI" id="CHEBI:59789"/>
        <dbReference type="ChEBI" id="CHEBI:74411"/>
        <dbReference type="ChEBI" id="CHEBI:74493"/>
        <dbReference type="EC" id="2.1.1.182"/>
    </reaction>
</comment>
<comment type="subcellular location">
    <subcellularLocation>
        <location evidence="1">Cytoplasm</location>
    </subcellularLocation>
</comment>
<comment type="similarity">
    <text evidence="1">Belongs to the class I-like SAM-binding methyltransferase superfamily. rRNA adenine N(6)-methyltransferase family. RsmA subfamily.</text>
</comment>
<organism>
    <name type="scientific">Latilactobacillus sakei subsp. sakei (strain 23K)</name>
    <name type="common">Lactobacillus sakei subsp. sakei</name>
    <dbReference type="NCBI Taxonomy" id="314315"/>
    <lineage>
        <taxon>Bacteria</taxon>
        <taxon>Bacillati</taxon>
        <taxon>Bacillota</taxon>
        <taxon>Bacilli</taxon>
        <taxon>Lactobacillales</taxon>
        <taxon>Lactobacillaceae</taxon>
        <taxon>Latilactobacillus</taxon>
    </lineage>
</organism>
<keyword id="KW-0963">Cytoplasm</keyword>
<keyword id="KW-0489">Methyltransferase</keyword>
<keyword id="KW-1185">Reference proteome</keyword>
<keyword id="KW-0694">RNA-binding</keyword>
<keyword id="KW-0698">rRNA processing</keyword>
<keyword id="KW-0949">S-adenosyl-L-methionine</keyword>
<keyword id="KW-0808">Transferase</keyword>
<sequence>MEDIANPERTKKILKRYGFKFKKSLGQNFLTNITILKQIVEAGEITKDDDVIEIGPGIGSLTEQIARKAHQVLSFEIDDRLIPVLKDTLNHYHNVTVLNQDILEADLPTLIAKHFDGQHNLKIVANLPYYITTPIMLHLLEAGLPIDRMVLMMQKEVAERIDAAPGSKAYGSLSIAVQLHSEVKLAFIVPKTAFVPQPNVDSAIVEFVGRQEPLVTVQNQQLFDQLVRGAFAQRRKTLWNNLQNQFGKQEEVKAGLVAALDQADIAPSTRAEQLSIQQFAQLSDCLNEQPVFAKKRG</sequence>
<dbReference type="EC" id="2.1.1.182" evidence="1"/>
<dbReference type="EMBL" id="CR936503">
    <property type="protein sequence ID" value="CAI55962.1"/>
    <property type="molecule type" value="Genomic_DNA"/>
</dbReference>
<dbReference type="RefSeq" id="WP_011375347.1">
    <property type="nucleotide sequence ID" value="NC_007576.1"/>
</dbReference>
<dbReference type="SMR" id="Q38V22"/>
<dbReference type="STRING" id="314315.LCA_1655"/>
<dbReference type="KEGG" id="lsa:LCA_1655"/>
<dbReference type="eggNOG" id="COG0030">
    <property type="taxonomic scope" value="Bacteria"/>
</dbReference>
<dbReference type="HOGENOM" id="CLU_041220_0_0_9"/>
<dbReference type="OrthoDB" id="9814755at2"/>
<dbReference type="Proteomes" id="UP000002707">
    <property type="component" value="Chromosome"/>
</dbReference>
<dbReference type="GO" id="GO:0005829">
    <property type="term" value="C:cytosol"/>
    <property type="evidence" value="ECO:0007669"/>
    <property type="project" value="TreeGrafter"/>
</dbReference>
<dbReference type="GO" id="GO:0052908">
    <property type="term" value="F:16S rRNA (adenine(1518)-N(6)/adenine(1519)-N(6))-dimethyltransferase activity"/>
    <property type="evidence" value="ECO:0007669"/>
    <property type="project" value="UniProtKB-EC"/>
</dbReference>
<dbReference type="GO" id="GO:0003723">
    <property type="term" value="F:RNA binding"/>
    <property type="evidence" value="ECO:0007669"/>
    <property type="project" value="UniProtKB-KW"/>
</dbReference>
<dbReference type="CDD" id="cd02440">
    <property type="entry name" value="AdoMet_MTases"/>
    <property type="match status" value="1"/>
</dbReference>
<dbReference type="FunFam" id="1.10.8.100:FF:000001">
    <property type="entry name" value="Ribosomal RNA small subunit methyltransferase A"/>
    <property type="match status" value="1"/>
</dbReference>
<dbReference type="FunFam" id="3.40.50.150:FF:000023">
    <property type="entry name" value="Ribosomal RNA small subunit methyltransferase A"/>
    <property type="match status" value="1"/>
</dbReference>
<dbReference type="Gene3D" id="1.10.8.100">
    <property type="entry name" value="Ribosomal RNA adenine dimethylase-like, domain 2"/>
    <property type="match status" value="1"/>
</dbReference>
<dbReference type="Gene3D" id="3.40.50.150">
    <property type="entry name" value="Vaccinia Virus protein VP39"/>
    <property type="match status" value="1"/>
</dbReference>
<dbReference type="HAMAP" id="MF_00607">
    <property type="entry name" value="16SrRNA_methyltr_A"/>
    <property type="match status" value="1"/>
</dbReference>
<dbReference type="InterPro" id="IPR001737">
    <property type="entry name" value="KsgA/Erm"/>
</dbReference>
<dbReference type="InterPro" id="IPR023165">
    <property type="entry name" value="rRNA_Ade_diMease-like_C"/>
</dbReference>
<dbReference type="InterPro" id="IPR020596">
    <property type="entry name" value="rRNA_Ade_Mease_Trfase_CS"/>
</dbReference>
<dbReference type="InterPro" id="IPR020598">
    <property type="entry name" value="rRNA_Ade_methylase_Trfase_N"/>
</dbReference>
<dbReference type="InterPro" id="IPR011530">
    <property type="entry name" value="rRNA_adenine_dimethylase"/>
</dbReference>
<dbReference type="InterPro" id="IPR029063">
    <property type="entry name" value="SAM-dependent_MTases_sf"/>
</dbReference>
<dbReference type="NCBIfam" id="TIGR00755">
    <property type="entry name" value="ksgA"/>
    <property type="match status" value="1"/>
</dbReference>
<dbReference type="PANTHER" id="PTHR11727">
    <property type="entry name" value="DIMETHYLADENOSINE TRANSFERASE"/>
    <property type="match status" value="1"/>
</dbReference>
<dbReference type="PANTHER" id="PTHR11727:SF7">
    <property type="entry name" value="DIMETHYLADENOSINE TRANSFERASE-RELATED"/>
    <property type="match status" value="1"/>
</dbReference>
<dbReference type="Pfam" id="PF00398">
    <property type="entry name" value="RrnaAD"/>
    <property type="match status" value="1"/>
</dbReference>
<dbReference type="SMART" id="SM00650">
    <property type="entry name" value="rADc"/>
    <property type="match status" value="1"/>
</dbReference>
<dbReference type="SUPFAM" id="SSF53335">
    <property type="entry name" value="S-adenosyl-L-methionine-dependent methyltransferases"/>
    <property type="match status" value="1"/>
</dbReference>
<dbReference type="PROSITE" id="PS01131">
    <property type="entry name" value="RRNA_A_DIMETH"/>
    <property type="match status" value="1"/>
</dbReference>
<dbReference type="PROSITE" id="PS51689">
    <property type="entry name" value="SAM_RNA_A_N6_MT"/>
    <property type="match status" value="1"/>
</dbReference>
<reference key="1">
    <citation type="journal article" date="2005" name="Nat. Biotechnol.">
        <title>The complete genome sequence of the meat-borne lactic acid bacterium Lactobacillus sakei 23K.</title>
        <authorList>
            <person name="Chaillou S."/>
            <person name="Champomier-Verges M.-C."/>
            <person name="Cornet M."/>
            <person name="Crutz-Le Coq A.-M."/>
            <person name="Dudez A.-M."/>
            <person name="Martin V."/>
            <person name="Beaufils S."/>
            <person name="Darbon-Rongere E."/>
            <person name="Bossy R."/>
            <person name="Loux V."/>
            <person name="Zagorec M."/>
        </authorList>
    </citation>
    <scope>NUCLEOTIDE SEQUENCE [LARGE SCALE GENOMIC DNA]</scope>
    <source>
        <strain>23K</strain>
    </source>
</reference>
<accession>Q38V22</accession>
<feature type="chain" id="PRO_0000257299" description="Ribosomal RNA small subunit methyltransferase A">
    <location>
        <begin position="1"/>
        <end position="297"/>
    </location>
</feature>
<feature type="binding site" evidence="1">
    <location>
        <position position="28"/>
    </location>
    <ligand>
        <name>S-adenosyl-L-methionine</name>
        <dbReference type="ChEBI" id="CHEBI:59789"/>
    </ligand>
</feature>
<feature type="binding site" evidence="1">
    <location>
        <position position="30"/>
    </location>
    <ligand>
        <name>S-adenosyl-L-methionine</name>
        <dbReference type="ChEBI" id="CHEBI:59789"/>
    </ligand>
</feature>
<feature type="binding site" evidence="1">
    <location>
        <position position="55"/>
    </location>
    <ligand>
        <name>S-adenosyl-L-methionine</name>
        <dbReference type="ChEBI" id="CHEBI:59789"/>
    </ligand>
</feature>
<feature type="binding site" evidence="1">
    <location>
        <position position="76"/>
    </location>
    <ligand>
        <name>S-adenosyl-L-methionine</name>
        <dbReference type="ChEBI" id="CHEBI:59789"/>
    </ligand>
</feature>
<feature type="binding site" evidence="1">
    <location>
        <position position="101"/>
    </location>
    <ligand>
        <name>S-adenosyl-L-methionine</name>
        <dbReference type="ChEBI" id="CHEBI:59789"/>
    </ligand>
</feature>
<feature type="binding site" evidence="1">
    <location>
        <position position="126"/>
    </location>
    <ligand>
        <name>S-adenosyl-L-methionine</name>
        <dbReference type="ChEBI" id="CHEBI:59789"/>
    </ligand>
</feature>